<feature type="chain" id="PRO_0000440117" description="Protein SENSITIVE TO PROTON RHIZOTOXICITY 2">
    <location>
        <begin position="1"/>
        <end position="373"/>
    </location>
</feature>
<feature type="zinc finger region" description="C2H2-type 1" evidence="1">
    <location>
        <begin position="217"/>
        <end position="239"/>
    </location>
</feature>
<feature type="zinc finger region" description="C2H2-type 2" evidence="1">
    <location>
        <begin position="327"/>
        <end position="362"/>
    </location>
</feature>
<proteinExistence type="evidence at protein level"/>
<name>STOP2_ARATH</name>
<accession>Q0WT24</accession>
<accession>Q9FFB9</accession>
<gene>
    <name evidence="3" type="primary">STOP2</name>
    <name evidence="5" type="ordered locus">At5g22890</name>
    <name evidence="6" type="ORF">MRN17.12</name>
</gene>
<dbReference type="EMBL" id="AB005243">
    <property type="protein sequence ID" value="BAB10610.1"/>
    <property type="status" value="ALT_INIT"/>
    <property type="molecule type" value="Genomic_DNA"/>
</dbReference>
<dbReference type="EMBL" id="CP002688">
    <property type="protein sequence ID" value="AED93094.1"/>
    <property type="molecule type" value="Genomic_DNA"/>
</dbReference>
<dbReference type="EMBL" id="AK227740">
    <property type="protein sequence ID" value="BAE99724.1"/>
    <property type="molecule type" value="mRNA"/>
</dbReference>
<dbReference type="EMBL" id="BT004810">
    <property type="protein sequence ID" value="AAO44076.1"/>
    <property type="molecule type" value="mRNA"/>
</dbReference>
<dbReference type="RefSeq" id="NP_197680.2">
    <property type="nucleotide sequence ID" value="NM_122195.4"/>
</dbReference>
<dbReference type="IntAct" id="Q0WT24">
    <property type="interactions" value="14"/>
</dbReference>
<dbReference type="STRING" id="3702.Q0WT24"/>
<dbReference type="PaxDb" id="3702-AT5G22890.1"/>
<dbReference type="ProteomicsDB" id="245220"/>
<dbReference type="EnsemblPlants" id="AT5G22890.1">
    <property type="protein sequence ID" value="AT5G22890.1"/>
    <property type="gene ID" value="AT5G22890"/>
</dbReference>
<dbReference type="GeneID" id="832353"/>
<dbReference type="Gramene" id="AT5G22890.1">
    <property type="protein sequence ID" value="AT5G22890.1"/>
    <property type="gene ID" value="AT5G22890"/>
</dbReference>
<dbReference type="KEGG" id="ath:AT5G22890"/>
<dbReference type="Araport" id="AT5G22890"/>
<dbReference type="TAIR" id="AT5G22890">
    <property type="gene designation" value="STOP2"/>
</dbReference>
<dbReference type="eggNOG" id="KOG1721">
    <property type="taxonomic scope" value="Eukaryota"/>
</dbReference>
<dbReference type="HOGENOM" id="CLU_029078_1_1_1"/>
<dbReference type="InParanoid" id="Q0WT24"/>
<dbReference type="OMA" id="DCNIKDE"/>
<dbReference type="PhylomeDB" id="Q0WT24"/>
<dbReference type="PRO" id="PR:Q0WT24"/>
<dbReference type="Proteomes" id="UP000006548">
    <property type="component" value="Chromosome 5"/>
</dbReference>
<dbReference type="ExpressionAtlas" id="Q0WT24">
    <property type="expression patterns" value="baseline and differential"/>
</dbReference>
<dbReference type="GO" id="GO:0005634">
    <property type="term" value="C:nucleus"/>
    <property type="evidence" value="ECO:0000314"/>
    <property type="project" value="UniProtKB"/>
</dbReference>
<dbReference type="GO" id="GO:0003700">
    <property type="term" value="F:DNA-binding transcription factor activity"/>
    <property type="evidence" value="ECO:0000314"/>
    <property type="project" value="UniProtKB"/>
</dbReference>
<dbReference type="GO" id="GO:0008270">
    <property type="term" value="F:zinc ion binding"/>
    <property type="evidence" value="ECO:0007669"/>
    <property type="project" value="UniProtKB-KW"/>
</dbReference>
<dbReference type="GO" id="GO:0006355">
    <property type="term" value="P:regulation of DNA-templated transcription"/>
    <property type="evidence" value="ECO:0000315"/>
    <property type="project" value="UniProtKB"/>
</dbReference>
<dbReference type="GO" id="GO:0010447">
    <property type="term" value="P:response to acidic pH"/>
    <property type="evidence" value="ECO:0000315"/>
    <property type="project" value="UniProtKB"/>
</dbReference>
<dbReference type="GO" id="GO:0010044">
    <property type="term" value="P:response to aluminum ion"/>
    <property type="evidence" value="ECO:0000315"/>
    <property type="project" value="UniProtKB"/>
</dbReference>
<dbReference type="FunFam" id="3.30.160.60:FF:000145">
    <property type="entry name" value="Zinc finger protein 574"/>
    <property type="match status" value="1"/>
</dbReference>
<dbReference type="Gene3D" id="3.30.160.60">
    <property type="entry name" value="Classic Zinc Finger"/>
    <property type="match status" value="1"/>
</dbReference>
<dbReference type="InterPro" id="IPR044300">
    <property type="entry name" value="STOP1/2"/>
</dbReference>
<dbReference type="InterPro" id="IPR036236">
    <property type="entry name" value="Znf_C2H2_sf"/>
</dbReference>
<dbReference type="InterPro" id="IPR013087">
    <property type="entry name" value="Znf_C2H2_type"/>
</dbReference>
<dbReference type="PANTHER" id="PTHR46352">
    <property type="entry name" value="PROTEIN SENSITIVE TO PROTON RHIZOTOXICITY 1"/>
    <property type="match status" value="1"/>
</dbReference>
<dbReference type="PANTHER" id="PTHR46352:SF8">
    <property type="entry name" value="PROTEIN SENSITIVE TO PROTON RHIZOTOXICITY 2"/>
    <property type="match status" value="1"/>
</dbReference>
<dbReference type="Pfam" id="PF23115">
    <property type="entry name" value="zf-C2H2_STOP2_3rd"/>
    <property type="match status" value="1"/>
</dbReference>
<dbReference type="Pfam" id="PF23118">
    <property type="entry name" value="zf-C2H2_STOP2_C"/>
    <property type="match status" value="1"/>
</dbReference>
<dbReference type="SMART" id="SM00355">
    <property type="entry name" value="ZnF_C2H2"/>
    <property type="match status" value="3"/>
</dbReference>
<dbReference type="SUPFAM" id="SSF57667">
    <property type="entry name" value="beta-beta-alpha zinc fingers"/>
    <property type="match status" value="1"/>
</dbReference>
<dbReference type="PROSITE" id="PS00028">
    <property type="entry name" value="ZINC_FINGER_C2H2_1"/>
    <property type="match status" value="1"/>
</dbReference>
<dbReference type="PROSITE" id="PS50157">
    <property type="entry name" value="ZINC_FINGER_C2H2_2"/>
    <property type="match status" value="1"/>
</dbReference>
<sequence length="373" mass="42250">MHIHMMNRDEHIAKKVEGSISSFSGETSTSSKQIYVNPVTTTGTKSMEDDDVSLSLLYNLSTLHEKVHQIQSLVSFYMVSTNNINQSSGSTSLAVANIGSLVQEIITAASSMLYTCQQLQIGSNNNNNDIDNDQTVDAMVLEFSRQETDPGHDFVQESTNLFGVQERGQISFPDQNLDWYNTETINPKKDKHRSKPSSGSYDILELDVADLLAKYTHYCQICGKGFKRDANLRMHMRAHGDEYKTREALISPTSQDKKGGYSLKKHYYSCPQHGCRWNQRHEKFQPLKSVICAKNHYKRSHCPKMYMCRRCSVKHFSVLSDLRTHEKHCGDIKWVCSCGTKFSRKDKLMSHVSLFLGHVPAHGSSKPPTITLK</sequence>
<keyword id="KW-0479">Metal-binding</keyword>
<keyword id="KW-0539">Nucleus</keyword>
<keyword id="KW-1185">Reference proteome</keyword>
<keyword id="KW-0677">Repeat</keyword>
<keyword id="KW-0804">Transcription</keyword>
<keyword id="KW-0805">Transcription regulation</keyword>
<keyword id="KW-0862">Zinc</keyword>
<keyword id="KW-0863">Zinc-finger</keyword>
<organism>
    <name type="scientific">Arabidopsis thaliana</name>
    <name type="common">Mouse-ear cress</name>
    <dbReference type="NCBI Taxonomy" id="3702"/>
    <lineage>
        <taxon>Eukaryota</taxon>
        <taxon>Viridiplantae</taxon>
        <taxon>Streptophyta</taxon>
        <taxon>Embryophyta</taxon>
        <taxon>Tracheophyta</taxon>
        <taxon>Spermatophyta</taxon>
        <taxon>Magnoliopsida</taxon>
        <taxon>eudicotyledons</taxon>
        <taxon>Gunneridae</taxon>
        <taxon>Pentapetalae</taxon>
        <taxon>rosids</taxon>
        <taxon>malvids</taxon>
        <taxon>Brassicales</taxon>
        <taxon>Brassicaceae</taxon>
        <taxon>Camelineae</taxon>
        <taxon>Arabidopsis</taxon>
    </lineage>
</organism>
<reference key="1">
    <citation type="journal article" date="1997" name="DNA Res.">
        <title>Structural analysis of Arabidopsis thaliana chromosome 5. I. Sequence features of the 1.6 Mb regions covered by twenty physically assigned P1 clones.</title>
        <authorList>
            <person name="Sato S."/>
            <person name="Kotani H."/>
            <person name="Nakamura Y."/>
            <person name="Kaneko T."/>
            <person name="Asamizu E."/>
            <person name="Fukami M."/>
            <person name="Miyajima N."/>
            <person name="Tabata S."/>
        </authorList>
    </citation>
    <scope>NUCLEOTIDE SEQUENCE [LARGE SCALE GENOMIC DNA]</scope>
    <source>
        <strain>cv. Columbia</strain>
    </source>
</reference>
<reference key="2">
    <citation type="journal article" date="2017" name="Plant J.">
        <title>Araport11: a complete reannotation of the Arabidopsis thaliana reference genome.</title>
        <authorList>
            <person name="Cheng C.Y."/>
            <person name="Krishnakumar V."/>
            <person name="Chan A.P."/>
            <person name="Thibaud-Nissen F."/>
            <person name="Schobel S."/>
            <person name="Town C.D."/>
        </authorList>
    </citation>
    <scope>GENOME REANNOTATION</scope>
    <source>
        <strain>cv. Columbia</strain>
    </source>
</reference>
<reference key="3">
    <citation type="submission" date="2006-07" db="EMBL/GenBank/DDBJ databases">
        <title>Large-scale analysis of RIKEN Arabidopsis full-length (RAFL) cDNAs.</title>
        <authorList>
            <person name="Totoki Y."/>
            <person name="Seki M."/>
            <person name="Ishida J."/>
            <person name="Nakajima M."/>
            <person name="Enju A."/>
            <person name="Kamiya A."/>
            <person name="Narusaka M."/>
            <person name="Shin-i T."/>
            <person name="Nakagawa M."/>
            <person name="Sakamoto N."/>
            <person name="Oishi K."/>
            <person name="Kohara Y."/>
            <person name="Kobayashi M."/>
            <person name="Toyoda A."/>
            <person name="Sakaki Y."/>
            <person name="Sakurai T."/>
            <person name="Iida K."/>
            <person name="Akiyama K."/>
            <person name="Satou M."/>
            <person name="Toyoda T."/>
            <person name="Konagaya A."/>
            <person name="Carninci P."/>
            <person name="Kawai J."/>
            <person name="Hayashizaki Y."/>
            <person name="Shinozaki K."/>
        </authorList>
    </citation>
    <scope>NUCLEOTIDE SEQUENCE [LARGE SCALE MRNA]</scope>
    <source>
        <strain>cv. Columbia</strain>
    </source>
</reference>
<reference key="4">
    <citation type="journal article" date="2003" name="Science">
        <title>Empirical analysis of transcriptional activity in the Arabidopsis genome.</title>
        <authorList>
            <person name="Yamada K."/>
            <person name="Lim J."/>
            <person name="Dale J.M."/>
            <person name="Chen H."/>
            <person name="Shinn P."/>
            <person name="Palm C.J."/>
            <person name="Southwick A.M."/>
            <person name="Wu H.C."/>
            <person name="Kim C.J."/>
            <person name="Nguyen M."/>
            <person name="Pham P.K."/>
            <person name="Cheuk R.F."/>
            <person name="Karlin-Newmann G."/>
            <person name="Liu S.X."/>
            <person name="Lam B."/>
            <person name="Sakano H."/>
            <person name="Wu T."/>
            <person name="Yu G."/>
            <person name="Miranda M."/>
            <person name="Quach H.L."/>
            <person name="Tripp M."/>
            <person name="Chang C.H."/>
            <person name="Lee J.M."/>
            <person name="Toriumi M.J."/>
            <person name="Chan M.M."/>
            <person name="Tang C.C."/>
            <person name="Onodera C.S."/>
            <person name="Deng J.M."/>
            <person name="Akiyama K."/>
            <person name="Ansari Y."/>
            <person name="Arakawa T."/>
            <person name="Banh J."/>
            <person name="Banno F."/>
            <person name="Bowser L."/>
            <person name="Brooks S.Y."/>
            <person name="Carninci P."/>
            <person name="Chao Q."/>
            <person name="Choy N."/>
            <person name="Enju A."/>
            <person name="Goldsmith A.D."/>
            <person name="Gurjal M."/>
            <person name="Hansen N.F."/>
            <person name="Hayashizaki Y."/>
            <person name="Johnson-Hopson C."/>
            <person name="Hsuan V.W."/>
            <person name="Iida K."/>
            <person name="Karnes M."/>
            <person name="Khan S."/>
            <person name="Koesema E."/>
            <person name="Ishida J."/>
            <person name="Jiang P.X."/>
            <person name="Jones T."/>
            <person name="Kawai J."/>
            <person name="Kamiya A."/>
            <person name="Meyers C."/>
            <person name="Nakajima M."/>
            <person name="Narusaka M."/>
            <person name="Seki M."/>
            <person name="Sakurai T."/>
            <person name="Satou M."/>
            <person name="Tamse R."/>
            <person name="Vaysberg M."/>
            <person name="Wallender E.K."/>
            <person name="Wong C."/>
            <person name="Yamamura Y."/>
            <person name="Yuan S."/>
            <person name="Shinozaki K."/>
            <person name="Davis R.W."/>
            <person name="Theologis A."/>
            <person name="Ecker J.R."/>
        </authorList>
    </citation>
    <scope>NUCLEOTIDE SEQUENCE [LARGE SCALE MRNA] OF 139-373</scope>
    <source>
        <strain>cv. Columbia</strain>
    </source>
</reference>
<reference key="5">
    <citation type="journal article" date="2014" name="Mol. Plant">
        <title>STOP2 activates transcription of several genes for Al- and low pH-tolerance that are regulated by STOP1 in Arabidopsis.</title>
        <authorList>
            <person name="Kobayashi Y."/>
            <person name="Ohyama Y."/>
            <person name="Kobayashi Y."/>
            <person name="Ito H."/>
            <person name="Iuchi S."/>
            <person name="Fujita M."/>
            <person name="Zhao C.-R."/>
            <person name="Tanveer T."/>
            <person name="Ganesan M."/>
            <person name="Kobayashi M."/>
            <person name="Koyama H."/>
        </authorList>
    </citation>
    <scope>FUNCTION</scope>
    <scope>SUBCELLULAR LOCATION</scope>
    <scope>TISSUE SPECIFICITY</scope>
    <source>
        <strain>cv. Columbia</strain>
    </source>
</reference>
<evidence type="ECO:0000255" key="1">
    <source>
        <dbReference type="PROSITE-ProRule" id="PRU00042"/>
    </source>
</evidence>
<evidence type="ECO:0000269" key="2">
    <source>
    </source>
</evidence>
<evidence type="ECO:0000303" key="3">
    <source>
    </source>
</evidence>
<evidence type="ECO:0000305" key="4"/>
<evidence type="ECO:0000312" key="5">
    <source>
        <dbReference type="Araport" id="AT5G22890"/>
    </source>
</evidence>
<evidence type="ECO:0000312" key="6">
    <source>
        <dbReference type="EMBL" id="BAB10610.1"/>
    </source>
</evidence>
<protein>
    <recommendedName>
        <fullName evidence="3">Protein SENSITIVE TO PROTON RHIZOTOXICITY 2</fullName>
    </recommendedName>
    <alternativeName>
        <fullName evidence="3">Zinc finger protein STOP2</fullName>
    </alternativeName>
</protein>
<comment type="function">
    <text evidence="2">Probable transcription factor. Together with STOP1, plays a critical role in tolerance to major stress factors in acid soils such as proton H(+) and aluminum ion Al(3+). Required for the expression of genes in response to acidic stress (e.g. ALMT1 and MATE), and Al-activated citrate exudation.</text>
</comment>
<comment type="interaction">
    <interactant intactId="EBI-4424123">
        <id>Q0WT24</id>
    </interactant>
    <interactant intactId="EBI-4473692">
        <id>O80575</id>
        <label>At2g44050</label>
    </interactant>
    <organismsDiffer>false</organismsDiffer>
    <experiments>3</experiments>
</comment>
<comment type="interaction">
    <interactant intactId="EBI-4424123">
        <id>Q0WT24</id>
    </interactant>
    <interactant intactId="EBI-4426649">
        <id>Q17TI5</id>
        <label>BRX</label>
    </interactant>
    <organismsDiffer>false</organismsDiffer>
    <experiments>3</experiments>
</comment>
<comment type="interaction">
    <interactant intactId="EBI-4424123">
        <id>Q0WT24</id>
    </interactant>
    <interactant intactId="EBI-25506855">
        <id>O23160</id>
        <label>MYB73</label>
    </interactant>
    <organismsDiffer>false</organismsDiffer>
    <experiments>3</experiments>
</comment>
<comment type="subcellular location">
    <subcellularLocation>
        <location evidence="2">Nucleus</location>
    </subcellularLocation>
</comment>
<comment type="tissue specificity">
    <text evidence="2">Expressed at low levels in roots (e.g. root tips and lateral roots), leaves (e.g. at the edge of mature leaves, possibly in hydathodes, and in vascular bundles), flowers (e.g. floral filaments), stems, siliques and cotyledons.</text>
</comment>
<comment type="sequence caution" evidence="4">
    <conflict type="erroneous initiation">
        <sequence resource="EMBL-CDS" id="BAB10610"/>
    </conflict>
    <text>Truncated N-terminus.</text>
</comment>